<organism>
    <name type="scientific">Escherichia coli (strain SE11)</name>
    <dbReference type="NCBI Taxonomy" id="409438"/>
    <lineage>
        <taxon>Bacteria</taxon>
        <taxon>Pseudomonadati</taxon>
        <taxon>Pseudomonadota</taxon>
        <taxon>Gammaproteobacteria</taxon>
        <taxon>Enterobacterales</taxon>
        <taxon>Enterobacteriaceae</taxon>
        <taxon>Escherichia</taxon>
    </lineage>
</organism>
<name>RECX_ECOSE</name>
<comment type="function">
    <text evidence="1">Modulates RecA activity.</text>
</comment>
<comment type="subcellular location">
    <subcellularLocation>
        <location evidence="1">Cytoplasm</location>
    </subcellularLocation>
</comment>
<comment type="similarity">
    <text evidence="1">Belongs to the RecX family.</text>
</comment>
<gene>
    <name evidence="1" type="primary">recX</name>
    <name type="ordered locus">ECSE_2946</name>
</gene>
<feature type="chain" id="PRO_1000137166" description="Regulatory protein RecX">
    <location>
        <begin position="1"/>
        <end position="166"/>
    </location>
</feature>
<proteinExistence type="inferred from homology"/>
<keyword id="KW-0963">Cytoplasm</keyword>
<protein>
    <recommendedName>
        <fullName evidence="1">Regulatory protein RecX</fullName>
    </recommendedName>
</protein>
<reference key="1">
    <citation type="journal article" date="2008" name="DNA Res.">
        <title>Complete genome sequence and comparative analysis of the wild-type commensal Escherichia coli strain SE11 isolated from a healthy adult.</title>
        <authorList>
            <person name="Oshima K."/>
            <person name="Toh H."/>
            <person name="Ogura Y."/>
            <person name="Sasamoto H."/>
            <person name="Morita H."/>
            <person name="Park S.-H."/>
            <person name="Ooka T."/>
            <person name="Iyoda S."/>
            <person name="Taylor T.D."/>
            <person name="Hayashi T."/>
            <person name="Itoh K."/>
            <person name="Hattori M."/>
        </authorList>
    </citation>
    <scope>NUCLEOTIDE SEQUENCE [LARGE SCALE GENOMIC DNA]</scope>
    <source>
        <strain>SE11</strain>
    </source>
</reference>
<dbReference type="EMBL" id="AP009240">
    <property type="protein sequence ID" value="BAG78470.1"/>
    <property type="molecule type" value="Genomic_DNA"/>
</dbReference>
<dbReference type="RefSeq" id="WP_000140509.1">
    <property type="nucleotide sequence ID" value="NC_011415.1"/>
</dbReference>
<dbReference type="SMR" id="B6I684"/>
<dbReference type="KEGG" id="ecy:ECSE_2946"/>
<dbReference type="HOGENOM" id="CLU_066607_3_2_6"/>
<dbReference type="Proteomes" id="UP000008199">
    <property type="component" value="Chromosome"/>
</dbReference>
<dbReference type="GO" id="GO:0005737">
    <property type="term" value="C:cytoplasm"/>
    <property type="evidence" value="ECO:0007669"/>
    <property type="project" value="UniProtKB-SubCell"/>
</dbReference>
<dbReference type="GO" id="GO:0006282">
    <property type="term" value="P:regulation of DNA repair"/>
    <property type="evidence" value="ECO:0007669"/>
    <property type="project" value="UniProtKB-UniRule"/>
</dbReference>
<dbReference type="FunFam" id="1.10.10.10:FF:000133">
    <property type="entry name" value="Regulatory protein RecX"/>
    <property type="match status" value="1"/>
</dbReference>
<dbReference type="FunFam" id="1.10.10.10:FF:000134">
    <property type="entry name" value="Regulatory protein RecX"/>
    <property type="match status" value="1"/>
</dbReference>
<dbReference type="FunFam" id="1.10.10.10:FF:000209">
    <property type="entry name" value="Regulatory protein RecX"/>
    <property type="match status" value="1"/>
</dbReference>
<dbReference type="Gene3D" id="1.10.10.10">
    <property type="entry name" value="Winged helix-like DNA-binding domain superfamily/Winged helix DNA-binding domain"/>
    <property type="match status" value="3"/>
</dbReference>
<dbReference type="HAMAP" id="MF_01114">
    <property type="entry name" value="RecX"/>
    <property type="match status" value="1"/>
</dbReference>
<dbReference type="InterPro" id="IPR053926">
    <property type="entry name" value="RecX_HTH_1st"/>
</dbReference>
<dbReference type="InterPro" id="IPR053924">
    <property type="entry name" value="RecX_HTH_2nd"/>
</dbReference>
<dbReference type="InterPro" id="IPR053925">
    <property type="entry name" value="RecX_HTH_3rd"/>
</dbReference>
<dbReference type="InterPro" id="IPR003783">
    <property type="entry name" value="Regulatory_RecX"/>
</dbReference>
<dbReference type="InterPro" id="IPR036388">
    <property type="entry name" value="WH-like_DNA-bd_sf"/>
</dbReference>
<dbReference type="NCBIfam" id="NF001052">
    <property type="entry name" value="PRK00117.1-1"/>
    <property type="match status" value="1"/>
</dbReference>
<dbReference type="PANTHER" id="PTHR33602">
    <property type="entry name" value="REGULATORY PROTEIN RECX FAMILY PROTEIN"/>
    <property type="match status" value="1"/>
</dbReference>
<dbReference type="PANTHER" id="PTHR33602:SF1">
    <property type="entry name" value="REGULATORY PROTEIN RECX FAMILY PROTEIN"/>
    <property type="match status" value="1"/>
</dbReference>
<dbReference type="Pfam" id="PF21982">
    <property type="entry name" value="RecX_HTH1"/>
    <property type="match status" value="1"/>
</dbReference>
<dbReference type="Pfam" id="PF02631">
    <property type="entry name" value="RecX_HTH2"/>
    <property type="match status" value="1"/>
</dbReference>
<dbReference type="Pfam" id="PF21981">
    <property type="entry name" value="RecX_HTH3"/>
    <property type="match status" value="1"/>
</dbReference>
<evidence type="ECO:0000255" key="1">
    <source>
        <dbReference type="HAMAP-Rule" id="MF_01114"/>
    </source>
</evidence>
<accession>B6I684</accession>
<sequence>MTESTSRRPAYARLLDRAVRILAVRDHSEQELRRKLAAPIMGKNGPEEIDATAEDYERVIAWCHEHGYLDDSRFVARFIASRSRKGYGPARIRQELNQKGISREATEKAMRECDIDWCALARDQVTRKYGEPLPTVFSEKVKIQRFLLYRGYLMEDIQDIWRNFAD</sequence>